<feature type="chain" id="PRO_1000198396" description="Dual-action ribosomal maturation protein DarP">
    <location>
        <begin position="1"/>
        <end position="183"/>
    </location>
</feature>
<keyword id="KW-0963">Cytoplasm</keyword>
<keyword id="KW-0690">Ribosome biogenesis</keyword>
<keyword id="KW-0694">RNA-binding</keyword>
<keyword id="KW-0699">rRNA-binding</keyword>
<proteinExistence type="inferred from homology"/>
<accession>B4TFG2</accession>
<comment type="function">
    <text evidence="1">Member of a network of 50S ribosomal subunit biogenesis factors which assembles along the 30S-50S interface, preventing incorrect 23S rRNA structures from forming. Promotes peptidyl transferase center (PTC) maturation.</text>
</comment>
<comment type="subcellular location">
    <subcellularLocation>
        <location evidence="1">Cytoplasm</location>
    </subcellularLocation>
    <text evidence="1">Associates with late stage pre-50S ribosomal subunits.</text>
</comment>
<comment type="similarity">
    <text evidence="1">Belongs to the DarP family.</text>
</comment>
<reference key="1">
    <citation type="journal article" date="2011" name="J. Bacteriol.">
        <title>Comparative genomics of 28 Salmonella enterica isolates: evidence for CRISPR-mediated adaptive sublineage evolution.</title>
        <authorList>
            <person name="Fricke W.F."/>
            <person name="Mammel M.K."/>
            <person name="McDermott P.F."/>
            <person name="Tartera C."/>
            <person name="White D.G."/>
            <person name="Leclerc J.E."/>
            <person name="Ravel J."/>
            <person name="Cebula T.A."/>
        </authorList>
    </citation>
    <scope>NUCLEOTIDE SEQUENCE [LARGE SCALE GENOMIC DNA]</scope>
    <source>
        <strain>SL476</strain>
    </source>
</reference>
<sequence length="183" mass="21392">MTKQPEDWLDDVPGDDIEDEDDEIIWVSKSEIKRDAEELKRLGAELVDLGKNALDKIPLDADLRDAIELAQRIKMEGRRRQLQLIGKMLRQRDVEPIRQALDKLKNRHNQQVVLFHKLEHLRDRLIVEGDDAVAEVLTLWPHADRQQLRSLIRNAKKEKEGNKPPKSARQIFQYLRELAENEG</sequence>
<evidence type="ECO:0000255" key="1">
    <source>
        <dbReference type="HAMAP-Rule" id="MF_00765"/>
    </source>
</evidence>
<protein>
    <recommendedName>
        <fullName evidence="1">Dual-action ribosomal maturation protein DarP</fullName>
    </recommendedName>
    <alternativeName>
        <fullName evidence="1">Large ribosomal subunit assembly factor DarP</fullName>
    </alternativeName>
</protein>
<name>DARP_SALHS</name>
<gene>
    <name evidence="1" type="primary">darP</name>
    <name type="ordered locus">SeHA_C4837</name>
</gene>
<organism>
    <name type="scientific">Salmonella heidelberg (strain SL476)</name>
    <dbReference type="NCBI Taxonomy" id="454169"/>
    <lineage>
        <taxon>Bacteria</taxon>
        <taxon>Pseudomonadati</taxon>
        <taxon>Pseudomonadota</taxon>
        <taxon>Gammaproteobacteria</taxon>
        <taxon>Enterobacterales</taxon>
        <taxon>Enterobacteriaceae</taxon>
        <taxon>Salmonella</taxon>
    </lineage>
</organism>
<dbReference type="EMBL" id="CP001120">
    <property type="protein sequence ID" value="ACF66507.1"/>
    <property type="molecule type" value="Genomic_DNA"/>
</dbReference>
<dbReference type="SMR" id="B4TFG2"/>
<dbReference type="KEGG" id="seh:SeHA_C4837"/>
<dbReference type="HOGENOM" id="CLU_106757_2_0_6"/>
<dbReference type="Proteomes" id="UP000001866">
    <property type="component" value="Chromosome"/>
</dbReference>
<dbReference type="GO" id="GO:0005829">
    <property type="term" value="C:cytosol"/>
    <property type="evidence" value="ECO:0007669"/>
    <property type="project" value="TreeGrafter"/>
</dbReference>
<dbReference type="GO" id="GO:0043022">
    <property type="term" value="F:ribosome binding"/>
    <property type="evidence" value="ECO:0007669"/>
    <property type="project" value="UniProtKB-UniRule"/>
</dbReference>
<dbReference type="GO" id="GO:0019843">
    <property type="term" value="F:rRNA binding"/>
    <property type="evidence" value="ECO:0007669"/>
    <property type="project" value="UniProtKB-UniRule"/>
</dbReference>
<dbReference type="GO" id="GO:1902626">
    <property type="term" value="P:assembly of large subunit precursor of preribosome"/>
    <property type="evidence" value="ECO:0007669"/>
    <property type="project" value="UniProtKB-UniRule"/>
</dbReference>
<dbReference type="CDD" id="cd16331">
    <property type="entry name" value="YjgA-like"/>
    <property type="match status" value="1"/>
</dbReference>
<dbReference type="FunFam" id="1.10.60.30:FF:000001">
    <property type="entry name" value="UPF0307 protein YjgA"/>
    <property type="match status" value="1"/>
</dbReference>
<dbReference type="FunFam" id="1.10.60.30:FF:000002">
    <property type="entry name" value="UPF0307 protein YjgA"/>
    <property type="match status" value="1"/>
</dbReference>
<dbReference type="Gene3D" id="1.10.60.30">
    <property type="entry name" value="PSPTO4464-like domains"/>
    <property type="match status" value="2"/>
</dbReference>
<dbReference type="HAMAP" id="MF_00765">
    <property type="entry name" value="DarP"/>
    <property type="match status" value="1"/>
</dbReference>
<dbReference type="InterPro" id="IPR006839">
    <property type="entry name" value="DarP"/>
</dbReference>
<dbReference type="InterPro" id="IPR023153">
    <property type="entry name" value="DarP_sf"/>
</dbReference>
<dbReference type="NCBIfam" id="NF003593">
    <property type="entry name" value="PRK05255.1-1"/>
    <property type="match status" value="1"/>
</dbReference>
<dbReference type="PANTHER" id="PTHR38101">
    <property type="entry name" value="UPF0307 PROTEIN YJGA"/>
    <property type="match status" value="1"/>
</dbReference>
<dbReference type="PANTHER" id="PTHR38101:SF1">
    <property type="entry name" value="UPF0307 PROTEIN YJGA"/>
    <property type="match status" value="1"/>
</dbReference>
<dbReference type="Pfam" id="PF04751">
    <property type="entry name" value="DarP"/>
    <property type="match status" value="1"/>
</dbReference>
<dbReference type="PIRSF" id="PIRSF016183">
    <property type="entry name" value="UCP016183"/>
    <property type="match status" value="1"/>
</dbReference>
<dbReference type="SUPFAM" id="SSF158710">
    <property type="entry name" value="PSPTO4464-like"/>
    <property type="match status" value="1"/>
</dbReference>